<evidence type="ECO:0000255" key="1">
    <source>
        <dbReference type="HAMAP-Rule" id="MF_01440"/>
    </source>
</evidence>
<sequence length="162" mass="17318">MDIKEIKVGIADLNVGKNPDKIITVGLGSCIGIALYDGIKCIGGLSHIMLPDSTQFSKVTNPMKFADLAIPILVEKMEKLGARKNGLKAKICGGASMFNFSDKSMVMDIGNRNGKAVKEKLKELSIPLLAEDIGGNKGRTMIFDTSTGKVYIKTVGLGTKEI</sequence>
<gene>
    <name evidence="1" type="primary">cheD</name>
    <name type="ordered locus">CLJ_B2978</name>
</gene>
<comment type="function">
    <text evidence="1">Probably deamidates glutamine residues to glutamate on methyl-accepting chemotaxis receptors (MCPs), playing an important role in chemotaxis.</text>
</comment>
<comment type="catalytic activity">
    <reaction evidence="1">
        <text>L-glutaminyl-[protein] + H2O = L-glutamyl-[protein] + NH4(+)</text>
        <dbReference type="Rhea" id="RHEA:16441"/>
        <dbReference type="Rhea" id="RHEA-COMP:10207"/>
        <dbReference type="Rhea" id="RHEA-COMP:10208"/>
        <dbReference type="ChEBI" id="CHEBI:15377"/>
        <dbReference type="ChEBI" id="CHEBI:28938"/>
        <dbReference type="ChEBI" id="CHEBI:29973"/>
        <dbReference type="ChEBI" id="CHEBI:30011"/>
        <dbReference type="EC" id="3.5.1.44"/>
    </reaction>
</comment>
<comment type="similarity">
    <text evidence="1">Belongs to the CheD family.</text>
</comment>
<name>CHED_CLOB6</name>
<dbReference type="EC" id="3.5.1.44" evidence="1"/>
<dbReference type="EMBL" id="CP001083">
    <property type="protein sequence ID" value="ACQ52927.1"/>
    <property type="molecule type" value="Genomic_DNA"/>
</dbReference>
<dbReference type="RefSeq" id="WP_003359122.1">
    <property type="nucleotide sequence ID" value="NC_012658.1"/>
</dbReference>
<dbReference type="SMR" id="C3L220"/>
<dbReference type="KEGG" id="cbi:CLJ_B2978"/>
<dbReference type="HOGENOM" id="CLU_087854_2_0_9"/>
<dbReference type="Proteomes" id="UP000002333">
    <property type="component" value="Chromosome"/>
</dbReference>
<dbReference type="GO" id="GO:0050568">
    <property type="term" value="F:protein-glutamine glutaminase activity"/>
    <property type="evidence" value="ECO:0007669"/>
    <property type="project" value="UniProtKB-UniRule"/>
</dbReference>
<dbReference type="GO" id="GO:0006935">
    <property type="term" value="P:chemotaxis"/>
    <property type="evidence" value="ECO:0007669"/>
    <property type="project" value="UniProtKB-UniRule"/>
</dbReference>
<dbReference type="CDD" id="cd16352">
    <property type="entry name" value="CheD"/>
    <property type="match status" value="1"/>
</dbReference>
<dbReference type="Gene3D" id="3.30.1330.200">
    <property type="match status" value="1"/>
</dbReference>
<dbReference type="HAMAP" id="MF_01440">
    <property type="entry name" value="CheD"/>
    <property type="match status" value="1"/>
</dbReference>
<dbReference type="InterPro" id="IPR038592">
    <property type="entry name" value="CheD-like_sf"/>
</dbReference>
<dbReference type="InterPro" id="IPR005659">
    <property type="entry name" value="Chemorcpt_Glu_NH3ase_CheD"/>
</dbReference>
<dbReference type="InterPro" id="IPR011324">
    <property type="entry name" value="Cytotoxic_necrot_fac-like_cat"/>
</dbReference>
<dbReference type="NCBIfam" id="NF010015">
    <property type="entry name" value="PRK13490.1"/>
    <property type="match status" value="1"/>
</dbReference>
<dbReference type="PANTHER" id="PTHR35147">
    <property type="entry name" value="CHEMORECEPTOR GLUTAMINE DEAMIDASE CHED-RELATED"/>
    <property type="match status" value="1"/>
</dbReference>
<dbReference type="PANTHER" id="PTHR35147:SF1">
    <property type="entry name" value="CHEMORECEPTOR GLUTAMINE DEAMIDASE CHED-RELATED"/>
    <property type="match status" value="1"/>
</dbReference>
<dbReference type="Pfam" id="PF03975">
    <property type="entry name" value="CheD"/>
    <property type="match status" value="1"/>
</dbReference>
<dbReference type="SUPFAM" id="SSF64438">
    <property type="entry name" value="CNF1/YfiH-like putative cysteine hydrolases"/>
    <property type="match status" value="1"/>
</dbReference>
<accession>C3L220</accession>
<reference key="1">
    <citation type="submission" date="2008-05" db="EMBL/GenBank/DDBJ databases">
        <title>Genome sequence of Clostridium botulinum Ba4 strain 657.</title>
        <authorList>
            <person name="Shrivastava S."/>
            <person name="Brown J.L."/>
            <person name="Bruce D."/>
            <person name="Detter C."/>
            <person name="Munk C."/>
            <person name="Smith L.A."/>
            <person name="Smith T.J."/>
            <person name="Sutton G."/>
            <person name="Brettin T.S."/>
        </authorList>
    </citation>
    <scope>NUCLEOTIDE SEQUENCE [LARGE SCALE GENOMIC DNA]</scope>
    <source>
        <strain>657 / Type Ba4</strain>
    </source>
</reference>
<protein>
    <recommendedName>
        <fullName evidence="1">Probable chemoreceptor glutamine deamidase CheD</fullName>
        <ecNumber evidence="1">3.5.1.44</ecNumber>
    </recommendedName>
</protein>
<keyword id="KW-0145">Chemotaxis</keyword>
<keyword id="KW-0378">Hydrolase</keyword>
<feature type="chain" id="PRO_1000215284" description="Probable chemoreceptor glutamine deamidase CheD">
    <location>
        <begin position="1"/>
        <end position="162"/>
    </location>
</feature>
<proteinExistence type="inferred from homology"/>
<organism>
    <name type="scientific">Clostridium botulinum (strain 657 / Type Ba4)</name>
    <dbReference type="NCBI Taxonomy" id="515621"/>
    <lineage>
        <taxon>Bacteria</taxon>
        <taxon>Bacillati</taxon>
        <taxon>Bacillota</taxon>
        <taxon>Clostridia</taxon>
        <taxon>Eubacteriales</taxon>
        <taxon>Clostridiaceae</taxon>
        <taxon>Clostridium</taxon>
    </lineage>
</organism>